<proteinExistence type="evidence at protein level"/>
<organism>
    <name type="scientific">Saccharomyces cerevisiae (strain ATCC 204508 / S288c)</name>
    <name type="common">Baker's yeast</name>
    <dbReference type="NCBI Taxonomy" id="559292"/>
    <lineage>
        <taxon>Eukaryota</taxon>
        <taxon>Fungi</taxon>
        <taxon>Dikarya</taxon>
        <taxon>Ascomycota</taxon>
        <taxon>Saccharomycotina</taxon>
        <taxon>Saccharomycetes</taxon>
        <taxon>Saccharomycetales</taxon>
        <taxon>Saccharomycetaceae</taxon>
        <taxon>Saccharomyces</taxon>
    </lineage>
</organism>
<protein>
    <recommendedName>
        <fullName>Copper metallothionein 1-1</fullName>
        <shortName>Cu-MT</shortName>
        <shortName>Cu-metallothionein</shortName>
    </recommendedName>
    <alternativeName>
        <fullName>Copper chelatin</fullName>
    </alternativeName>
    <alternativeName>
        <fullName>Copper thionein</fullName>
    </alternativeName>
</protein>
<reference key="1">
    <citation type="journal article" date="1984" name="Proc. Natl. Acad. Sci. U.S.A.">
        <title>Primary structure and transcription of an amplified genetic locus: the CUP1 locus of yeast.</title>
        <authorList>
            <person name="Karin M."/>
            <person name="Najarian R.C."/>
            <person name="Haslinger A."/>
            <person name="Valenzuela P."/>
            <person name="Welch J."/>
            <person name="Fogel S."/>
        </authorList>
    </citation>
    <scope>NUCLEOTIDE SEQUENCE [GENOMIC DNA]</scope>
</reference>
<reference key="2">
    <citation type="journal article" date="1984" name="Proc. Natl. Acad. Sci. U.S.A.">
        <title>Copper metallothionein of yeast, structure of the gene, and regulation of expression.</title>
        <authorList>
            <person name="Butt T.R."/>
            <person name="Sternberg E.J."/>
            <person name="Gorman J.A."/>
            <person name="Clark P."/>
            <person name="Hamer D."/>
            <person name="Rosenberg M."/>
            <person name="Crooke S.T."/>
        </authorList>
    </citation>
    <scope>NUCLEOTIDE SEQUENCE [GENOMIC DNA]</scope>
</reference>
<reference key="3">
    <citation type="journal article" date="1985" name="J. Biol. Chem.">
        <title>Yeast metallothionein. Sequence and metal-binding properties.</title>
        <authorList>
            <person name="Winge D.R."/>
            <person name="Nielson K.B."/>
            <person name="Gray W.R."/>
            <person name="Hamer D.H."/>
        </authorList>
    </citation>
    <scope>PROTEIN SEQUENCE</scope>
</reference>
<reference key="4">
    <citation type="journal article" date="1991" name="Mol. Gen. Genet.">
        <title>Multicopy CUP1 plasmids enhance cadmium and copper resistance levels in yeast.</title>
        <authorList>
            <person name="Jeyaprakash A."/>
            <person name="Welch J.W."/>
            <person name="Fogel S."/>
        </authorList>
    </citation>
    <scope>NUCLEOTIDE SEQUENCE [GENOMIC DNA]</scope>
</reference>
<reference key="5">
    <citation type="journal article" date="1994" name="Science">
        <title>Complete nucleotide sequence of Saccharomyces cerevisiae chromosome VIII.</title>
        <authorList>
            <person name="Johnston M."/>
            <person name="Andrews S."/>
            <person name="Brinkman R."/>
            <person name="Cooper J."/>
            <person name="Ding H."/>
            <person name="Dover J."/>
            <person name="Du Z."/>
            <person name="Favello A."/>
            <person name="Fulton L."/>
            <person name="Gattung S."/>
            <person name="Geisel C."/>
            <person name="Kirsten J."/>
            <person name="Kucaba T."/>
            <person name="Hillier L.W."/>
            <person name="Jier M."/>
            <person name="Johnston L."/>
            <person name="Langston Y."/>
            <person name="Latreille P."/>
            <person name="Louis E.J."/>
            <person name="Macri C."/>
            <person name="Mardis E."/>
            <person name="Menezes S."/>
            <person name="Mouser L."/>
            <person name="Nhan M."/>
            <person name="Rifkin L."/>
            <person name="Riles L."/>
            <person name="St Peter H."/>
            <person name="Trevaskis E."/>
            <person name="Vaughan K."/>
            <person name="Vignati D."/>
            <person name="Wilcox L."/>
            <person name="Wohldman P."/>
            <person name="Waterston R."/>
            <person name="Wilson R."/>
            <person name="Vaudin M."/>
        </authorList>
    </citation>
    <scope>NUCLEOTIDE SEQUENCE [LARGE SCALE GENOMIC DNA]</scope>
    <source>
        <strain>ATCC 204508 / S288c</strain>
    </source>
</reference>
<reference key="6">
    <citation type="journal article" date="2014" name="G3 (Bethesda)">
        <title>The reference genome sequence of Saccharomyces cerevisiae: Then and now.</title>
        <authorList>
            <person name="Engel S.R."/>
            <person name="Dietrich F.S."/>
            <person name="Fisk D.G."/>
            <person name="Binkley G."/>
            <person name="Balakrishnan R."/>
            <person name="Costanzo M.C."/>
            <person name="Dwight S.S."/>
            <person name="Hitz B.C."/>
            <person name="Karra K."/>
            <person name="Nash R.S."/>
            <person name="Weng S."/>
            <person name="Wong E.D."/>
            <person name="Lloyd P."/>
            <person name="Skrzypek M.S."/>
            <person name="Miyasato S.R."/>
            <person name="Simison M."/>
            <person name="Cherry J.M."/>
        </authorList>
    </citation>
    <scope>GENOME REANNOTATION</scope>
    <source>
        <strain>ATCC 204508 / S288c</strain>
    </source>
</reference>
<reference key="7">
    <citation type="journal article" date="2007" name="Genome Res.">
        <title>Approaching a complete repository of sequence-verified protein-encoding clones for Saccharomyces cerevisiae.</title>
        <authorList>
            <person name="Hu Y."/>
            <person name="Rolfs A."/>
            <person name="Bhullar B."/>
            <person name="Murthy T.V.S."/>
            <person name="Zhu C."/>
            <person name="Berger M.F."/>
            <person name="Camargo A.A."/>
            <person name="Kelley F."/>
            <person name="McCarron S."/>
            <person name="Jepson D."/>
            <person name="Richardson A."/>
            <person name="Raphael J."/>
            <person name="Moreira D."/>
            <person name="Taycher E."/>
            <person name="Zuo D."/>
            <person name="Mohr S."/>
            <person name="Kane M.F."/>
            <person name="Williamson J."/>
            <person name="Simpson A.J.G."/>
            <person name="Bulyk M.L."/>
            <person name="Harlow E."/>
            <person name="Marsischky G."/>
            <person name="Kolodner R.D."/>
            <person name="LaBaer J."/>
        </authorList>
    </citation>
    <scope>NUCLEOTIDE SEQUENCE [GENOMIC DNA]</scope>
    <source>
        <strain>ATCC 204508 / S288c</strain>
    </source>
</reference>
<reference key="8">
    <citation type="journal article" date="1988" name="J. Biol. Chem.">
        <title>X-ray absorption studies of yeast copper metallothionein.</title>
        <authorList>
            <person name="George G.N."/>
            <person name="Byrd J."/>
            <person name="Winge D.R."/>
        </authorList>
    </citation>
    <scope>ABSORPTION SPECTROSCOPY</scope>
</reference>
<reference key="9">
    <citation type="journal article" date="2012" name="Proteomics">
        <title>Sites of ubiquitin attachment in Saccharomyces cerevisiae.</title>
        <authorList>
            <person name="Starita L.M."/>
            <person name="Lo R.S."/>
            <person name="Eng J.K."/>
            <person name="von Haller P.D."/>
            <person name="Fields S."/>
        </authorList>
    </citation>
    <scope>UBIQUITINATION [LARGE SCALE ANALYSIS] AT LYS-30</scope>
    <scope>IDENTIFICATION BY MASS SPECTROMETRY [LARGE SCALE ANALYSIS]</scope>
</reference>
<reference key="10">
    <citation type="journal article" date="1996" name="FEBS Lett.">
        <title>3D solution structure of copper and silver-substituted yeast metallothioneins.</title>
        <authorList>
            <person name="Peterson C.W."/>
            <person name="Narula S.S."/>
            <person name="Armitage I.M."/>
        </authorList>
    </citation>
    <scope>STRUCTURE BY NMR OF 9-48</scope>
</reference>
<reference key="11">
    <citation type="journal article" date="2000" name="Eur. J. Biochem.">
        <title>High resolution solution structure of the protein part of Cu7 metallothionein.</title>
        <authorList>
            <person name="Bertini I."/>
            <person name="Hartmann H.J."/>
            <person name="Klein T."/>
            <person name="Liu G."/>
            <person name="Luchinat C."/>
            <person name="Weser U."/>
        </authorList>
    </citation>
    <scope>STRUCTURE BY NMR OF 9-48</scope>
</reference>
<reference key="12">
    <citation type="journal article" date="2005" name="Proc. Natl. Acad. Sci. U.S.A.">
        <title>The crystal structure of yeast copper thionein: the solution of a long-lasting enigma.</title>
        <authorList>
            <person name="Calderone V."/>
            <person name="Dolderer B."/>
            <person name="Hartmann H.J."/>
            <person name="Echner H."/>
            <person name="Luchinat C."/>
            <person name="Del Bianco C."/>
            <person name="Mangani S."/>
            <person name="Weser U."/>
        </authorList>
    </citation>
    <scope>X-RAY CRYSTALLOGRAPHY (1.44 ANGSTROMS) OF 13-48</scope>
</reference>
<accession>P0CX80</accession>
<accession>D3DL02</accession>
<accession>P07215</accession>
<sequence>MFSELINFQNEGHECQCQCGSCKNNEQCQKSCSCPTGCNSDDKCPCGNKSEETKKSCCSGK</sequence>
<comment type="function">
    <text>Protects the cell against copper toxicity by tightly chelating copper ions. May also act as a depository for copper designated for the effective transfer into the apo forms of copper proteins.</text>
</comment>
<comment type="domain">
    <text>Contains 1 metal-binding domain: 6 to 8 copper ions are chelated within a single copper-thiolate cluster and are coordinated via cysteinyl thiolate bridges to 10 cysteine ligands. 6 copper ions are trigonally coordinated, whereas the other 2 are only digonally coordinated.</text>
</comment>
<comment type="miscellaneous">
    <text>There are 2 copies for copper thionein in yeast. The 2 identical copies CUP1-1 and CUP1-2 are arranged in tandem.</text>
</comment>
<comment type="similarity">
    <text evidence="2">Belongs to the metallothionein superfamily. Type 12 family.</text>
</comment>
<gene>
    <name type="primary">CUP1-1</name>
    <name type="synonym">MTH1</name>
    <name type="ordered locus">YHR053C</name>
</gene>
<keyword id="KW-0002">3D-structure</keyword>
<keyword id="KW-0186">Copper</keyword>
<keyword id="KW-0903">Direct protein sequencing</keyword>
<keyword id="KW-1017">Isopeptide bond</keyword>
<keyword id="KW-0479">Metal-binding</keyword>
<keyword id="KW-0480">Metal-thiolate cluster</keyword>
<keyword id="KW-1185">Reference proteome</keyword>
<keyword id="KW-0832">Ubl conjugation</keyword>
<evidence type="ECO:0000256" key="1">
    <source>
        <dbReference type="SAM" id="MobiDB-lite"/>
    </source>
</evidence>
<evidence type="ECO:0000305" key="2"/>
<evidence type="ECO:0007744" key="3">
    <source>
    </source>
</evidence>
<evidence type="ECO:0007829" key="4">
    <source>
        <dbReference type="PDB" id="1AQR"/>
    </source>
</evidence>
<evidence type="ECO:0007829" key="5">
    <source>
        <dbReference type="PDB" id="1RJU"/>
    </source>
</evidence>
<feature type="propeptide" id="PRO_0000018675">
    <location>
        <begin position="1"/>
        <end position="8"/>
    </location>
</feature>
<feature type="chain" id="PRO_0000018676" description="Copper metallothionein 1-1">
    <location>
        <begin position="9"/>
        <end position="61"/>
    </location>
</feature>
<feature type="region of interest" description="Disordered" evidence="1">
    <location>
        <begin position="37"/>
        <end position="61"/>
    </location>
</feature>
<feature type="compositionally biased region" description="Basic and acidic residues" evidence="1">
    <location>
        <begin position="40"/>
        <end position="55"/>
    </location>
</feature>
<feature type="binding site">
    <location>
        <position position="15"/>
    </location>
    <ligand>
        <name>Cu cation</name>
        <dbReference type="ChEBI" id="CHEBI:23378"/>
        <label>1</label>
    </ligand>
</feature>
<feature type="binding site">
    <location>
        <position position="15"/>
    </location>
    <ligand>
        <name>Cu cation</name>
        <dbReference type="ChEBI" id="CHEBI:23378"/>
        <label>2</label>
    </ligand>
</feature>
<feature type="binding site">
    <location>
        <position position="17"/>
    </location>
    <ligand>
        <name>Cu cation</name>
        <dbReference type="ChEBI" id="CHEBI:23378"/>
        <label>1</label>
    </ligand>
</feature>
<feature type="binding site">
    <location>
        <position position="17"/>
    </location>
    <ligand>
        <name>Cu cation</name>
        <dbReference type="ChEBI" id="CHEBI:23378"/>
        <label>3</label>
    </ligand>
</feature>
<feature type="binding site">
    <location>
        <position position="19"/>
    </location>
    <ligand>
        <name>Cu cation</name>
        <dbReference type="ChEBI" id="CHEBI:23378"/>
        <label>4</label>
    </ligand>
</feature>
<feature type="binding site">
    <location>
        <position position="19"/>
    </location>
    <ligand>
        <name>Cu cation</name>
        <dbReference type="ChEBI" id="CHEBI:23378"/>
        <label>5</label>
    </ligand>
</feature>
<feature type="binding site">
    <location>
        <position position="22"/>
    </location>
    <ligand>
        <name>Cu cation</name>
        <dbReference type="ChEBI" id="CHEBI:23378"/>
        <label>3</label>
    </ligand>
</feature>
<feature type="binding site">
    <location>
        <position position="22"/>
    </location>
    <ligand>
        <name>Cu cation</name>
        <dbReference type="ChEBI" id="CHEBI:23378"/>
        <label>4</label>
    </ligand>
</feature>
<feature type="binding site">
    <location>
        <position position="22"/>
    </location>
    <ligand>
        <name>Cu cation</name>
        <dbReference type="ChEBI" id="CHEBI:23378"/>
        <label>6</label>
    </ligand>
</feature>
<feature type="binding site">
    <location>
        <position position="28"/>
    </location>
    <ligand>
        <name>Cu cation</name>
        <dbReference type="ChEBI" id="CHEBI:23378"/>
        <label>2</label>
    </ligand>
</feature>
<feature type="binding site">
    <location>
        <position position="28"/>
    </location>
    <ligand>
        <name>Cu cation</name>
        <dbReference type="ChEBI" id="CHEBI:23378"/>
        <label>6</label>
    </ligand>
</feature>
<feature type="binding site">
    <location>
        <position position="32"/>
    </location>
    <ligand>
        <name>Cu cation</name>
        <dbReference type="ChEBI" id="CHEBI:23378"/>
        <label>1</label>
    </ligand>
</feature>
<feature type="binding site">
    <location>
        <position position="32"/>
    </location>
    <ligand>
        <name>Cu cation</name>
        <dbReference type="ChEBI" id="CHEBI:23378"/>
        <label>7</label>
    </ligand>
</feature>
<feature type="binding site">
    <location>
        <position position="34"/>
    </location>
    <ligand>
        <name>Cu cation</name>
        <dbReference type="ChEBI" id="CHEBI:23378"/>
        <label>3</label>
    </ligand>
</feature>
<feature type="binding site">
    <location>
        <position position="34"/>
    </location>
    <ligand>
        <name>Cu cation</name>
        <dbReference type="ChEBI" id="CHEBI:23378"/>
        <label>7</label>
    </ligand>
</feature>
<feature type="binding site">
    <location>
        <position position="34"/>
    </location>
    <ligand>
        <name>Cu cation</name>
        <dbReference type="ChEBI" id="CHEBI:23378"/>
        <label>8</label>
    </ligand>
</feature>
<feature type="binding site">
    <location>
        <position position="38"/>
    </location>
    <ligand>
        <name>Cu cation</name>
        <dbReference type="ChEBI" id="CHEBI:23378"/>
        <label>5</label>
    </ligand>
</feature>
<feature type="binding site">
    <location>
        <position position="38"/>
    </location>
    <ligand>
        <name>Cu cation</name>
        <dbReference type="ChEBI" id="CHEBI:23378"/>
        <label>8</label>
    </ligand>
</feature>
<feature type="binding site">
    <location>
        <position position="44"/>
    </location>
    <ligand>
        <name>Cu cation</name>
        <dbReference type="ChEBI" id="CHEBI:23378"/>
        <label>4</label>
    </ligand>
</feature>
<feature type="binding site">
    <location>
        <position position="44"/>
    </location>
    <ligand>
        <name>Cu cation</name>
        <dbReference type="ChEBI" id="CHEBI:23378"/>
        <label>8</label>
    </ligand>
</feature>
<feature type="binding site">
    <location>
        <position position="46"/>
    </location>
    <ligand>
        <name>Cu cation</name>
        <dbReference type="ChEBI" id="CHEBI:23378"/>
        <label>6</label>
    </ligand>
</feature>
<feature type="binding site">
    <location>
        <position position="46"/>
    </location>
    <ligand>
        <name>Cu cation</name>
        <dbReference type="ChEBI" id="CHEBI:23378"/>
        <label>7</label>
    </ligand>
</feature>
<feature type="cross-link" description="Glycyl lysine isopeptide (Lys-Gly) (interchain with G-Cter in ubiquitin)" evidence="3">
    <location>
        <position position="30"/>
    </location>
</feature>
<feature type="turn" evidence="5">
    <location>
        <begin position="20"/>
        <end position="24"/>
    </location>
</feature>
<feature type="helix" evidence="5">
    <location>
        <begin position="26"/>
        <end position="28"/>
    </location>
</feature>
<feature type="turn" evidence="4">
    <location>
        <begin position="36"/>
        <end position="39"/>
    </location>
</feature>
<feature type="helix" evidence="5">
    <location>
        <begin position="41"/>
        <end position="43"/>
    </location>
</feature>
<name>MTCU1_YEAST</name>
<dbReference type="EMBL" id="K02204">
    <property type="protein sequence ID" value="AAA34541.1"/>
    <property type="molecule type" value="Genomic_DNA"/>
</dbReference>
<dbReference type="EMBL" id="U00061">
    <property type="protein sequence ID" value="AAB68382.1"/>
    <property type="molecule type" value="Genomic_DNA"/>
</dbReference>
<dbReference type="EMBL" id="AY558517">
    <property type="protein sequence ID" value="AAS56843.1"/>
    <property type="molecule type" value="Genomic_DNA"/>
</dbReference>
<dbReference type="EMBL" id="BK006934">
    <property type="protein sequence ID" value="DAA06748.1"/>
    <property type="molecule type" value="Genomic_DNA"/>
</dbReference>
<dbReference type="PIR" id="S14049">
    <property type="entry name" value="S14049"/>
</dbReference>
<dbReference type="RefSeq" id="NP_011922.1">
    <property type="nucleotide sequence ID" value="NM_001179185.1"/>
</dbReference>
<dbReference type="PDB" id="1AOO">
    <property type="method" value="NMR"/>
    <property type="chains" value="A=9-48"/>
</dbReference>
<dbReference type="PDB" id="1AQQ">
    <property type="method" value="NMR"/>
    <property type="chains" value="A=9-48"/>
</dbReference>
<dbReference type="PDB" id="1AQR">
    <property type="method" value="NMR"/>
    <property type="chains" value="A=9-48"/>
</dbReference>
<dbReference type="PDB" id="1AQS">
    <property type="method" value="NMR"/>
    <property type="chains" value="A=9-61"/>
</dbReference>
<dbReference type="PDB" id="1FMY">
    <property type="method" value="NMR"/>
    <property type="chains" value="A=9-48"/>
</dbReference>
<dbReference type="PDB" id="1RJU">
    <property type="method" value="X-ray"/>
    <property type="resolution" value="1.44 A"/>
    <property type="chains" value="V=13-48"/>
</dbReference>
<dbReference type="PDBsum" id="1AOO"/>
<dbReference type="PDBsum" id="1AQQ"/>
<dbReference type="PDBsum" id="1AQR"/>
<dbReference type="PDBsum" id="1AQS"/>
<dbReference type="PDBsum" id="1FMY"/>
<dbReference type="PDBsum" id="1RJU"/>
<dbReference type="BMRB" id="P0CX80"/>
<dbReference type="SMR" id="P0CX80"/>
<dbReference type="BioGRID" id="36485">
    <property type="interactions" value="14"/>
</dbReference>
<dbReference type="BioGRID" id="36487">
    <property type="interactions" value="57"/>
</dbReference>
<dbReference type="FunCoup" id="P0CX80">
    <property type="interactions" value="430"/>
</dbReference>
<dbReference type="STRING" id="4932.YHR053C"/>
<dbReference type="iPTMnet" id="P0CX80"/>
<dbReference type="PaxDb" id="4932-YHR053C"/>
<dbReference type="PeptideAtlas" id="P0CX80"/>
<dbReference type="EnsemblFungi" id="YHR053C_mRNA">
    <property type="protein sequence ID" value="YHR053C"/>
    <property type="gene ID" value="YHR053C"/>
</dbReference>
<dbReference type="EnsemblFungi" id="YHR055C_mRNA">
    <property type="protein sequence ID" value="YHR055C"/>
    <property type="gene ID" value="YHR055C"/>
</dbReference>
<dbReference type="GeneID" id="856450"/>
<dbReference type="KEGG" id="sce:YHR053C"/>
<dbReference type="KEGG" id="sce:YHR055C"/>
<dbReference type="AGR" id="SGD:S000001095"/>
<dbReference type="SGD" id="S000001095">
    <property type="gene designation" value="CUP1-1"/>
</dbReference>
<dbReference type="VEuPathDB" id="FungiDB:YHR053C"/>
<dbReference type="VEuPathDB" id="FungiDB:YHR055C"/>
<dbReference type="eggNOG" id="KOG4738">
    <property type="taxonomic scope" value="Eukaryota"/>
</dbReference>
<dbReference type="HOGENOM" id="CLU_2943095_0_0_1"/>
<dbReference type="InParanoid" id="P0CX80"/>
<dbReference type="OrthoDB" id="4036988at2759"/>
<dbReference type="BioCyc" id="YEAST:G3O-31107-MONOMER"/>
<dbReference type="PRO" id="PR:P0CX80"/>
<dbReference type="Proteomes" id="UP000002311">
    <property type="component" value="Chromosome VIII"/>
</dbReference>
<dbReference type="RNAct" id="P0CX80">
    <property type="molecule type" value="protein"/>
</dbReference>
<dbReference type="GO" id="GO:0005829">
    <property type="term" value="C:cytosol"/>
    <property type="evidence" value="ECO:0000314"/>
    <property type="project" value="SGD"/>
</dbReference>
<dbReference type="GO" id="GO:0005758">
    <property type="term" value="C:mitochondrial intermembrane space"/>
    <property type="evidence" value="ECO:0000314"/>
    <property type="project" value="SGD"/>
</dbReference>
<dbReference type="GO" id="GO:0016209">
    <property type="term" value="F:antioxidant activity"/>
    <property type="evidence" value="ECO:0000314"/>
    <property type="project" value="SGD"/>
</dbReference>
<dbReference type="GO" id="GO:0046870">
    <property type="term" value="F:cadmium ion binding"/>
    <property type="evidence" value="ECO:0000314"/>
    <property type="project" value="SGD"/>
</dbReference>
<dbReference type="GO" id="GO:0005507">
    <property type="term" value="F:copper ion binding"/>
    <property type="evidence" value="ECO:0000314"/>
    <property type="project" value="SGD"/>
</dbReference>
<dbReference type="GO" id="GO:0004784">
    <property type="term" value="F:superoxide dismutase activity"/>
    <property type="evidence" value="ECO:0000315"/>
    <property type="project" value="SGD"/>
</dbReference>
<dbReference type="GO" id="GO:0071585">
    <property type="term" value="P:detoxification of cadmium ion"/>
    <property type="evidence" value="ECO:0000315"/>
    <property type="project" value="SGD"/>
</dbReference>
<dbReference type="GO" id="GO:0010273">
    <property type="term" value="P:detoxification of copper ion"/>
    <property type="evidence" value="ECO:0000315"/>
    <property type="project" value="SGD"/>
</dbReference>
<dbReference type="GO" id="GO:0019430">
    <property type="term" value="P:removal of superoxide radicals"/>
    <property type="evidence" value="ECO:0000314"/>
    <property type="project" value="SGD"/>
</dbReference>
<dbReference type="GO" id="GO:0046688">
    <property type="term" value="P:response to copper ion"/>
    <property type="evidence" value="ECO:0000315"/>
    <property type="project" value="SGD"/>
</dbReference>
<dbReference type="Gene3D" id="4.10.650.10">
    <property type="entry name" value="Metallothionein domain superfamily, yeast"/>
    <property type="match status" value="1"/>
</dbReference>
<dbReference type="InterPro" id="IPR037130">
    <property type="entry name" value="Cup1_sf"/>
</dbReference>
<dbReference type="InterPro" id="IPR017854">
    <property type="entry name" value="Metalthion_dom_sf"/>
</dbReference>
<dbReference type="InterPro" id="IPR022710">
    <property type="entry name" value="Metalthion_dom_yeast"/>
</dbReference>
<dbReference type="Pfam" id="PF11403">
    <property type="entry name" value="Metallothio_yeast"/>
    <property type="match status" value="1"/>
</dbReference>
<dbReference type="SUPFAM" id="SSF57868">
    <property type="entry name" value="Metallothionein"/>
    <property type="match status" value="1"/>
</dbReference>